<proteinExistence type="inferred from homology"/>
<dbReference type="EMBL" id="L00966">
    <property type="protein sequence ID" value="AAL31327.1"/>
    <property type="status" value="ALT_SEQ"/>
    <property type="molecule type" value="Genomic_DNA"/>
</dbReference>
<dbReference type="EMBL" id="L00966">
    <property type="protein sequence ID" value="AAL31329.1"/>
    <property type="status" value="ALT_SEQ"/>
    <property type="molecule type" value="Genomic_DNA"/>
</dbReference>
<dbReference type="EMBL" id="AY261361">
    <property type="status" value="NOT_ANNOTATED_CDS"/>
    <property type="molecule type" value="Genomic_DNA"/>
</dbReference>
<dbReference type="SMR" id="Q8V9T4"/>
<dbReference type="Proteomes" id="UP000000860">
    <property type="component" value="Segment"/>
</dbReference>
<dbReference type="GO" id="GO:0044423">
    <property type="term" value="C:virion component"/>
    <property type="evidence" value="ECO:0007669"/>
    <property type="project" value="UniProtKB-KW"/>
</dbReference>
<reference key="1">
    <citation type="submission" date="2001-11" db="EMBL/GenBank/DDBJ databases">
        <title>Nucleotide sequence and analysis of 16.25 kilobase pairs of the African swine fever virus genome that span the central variable region.</title>
        <authorList>
            <person name="Roberts P.C."/>
            <person name="Lu Z."/>
            <person name="Rock D.L."/>
        </authorList>
    </citation>
    <scope>NUCLEOTIDE SEQUENCE [GENOMIC DNA]</scope>
</reference>
<reference key="2">
    <citation type="submission" date="2003-03" db="EMBL/GenBank/DDBJ databases">
        <title>African swine fever virus genomes.</title>
        <authorList>
            <person name="Kutish G.F."/>
            <person name="Rock D.L."/>
        </authorList>
    </citation>
    <scope>NUCLEOTIDE SEQUENCE [LARGE SCALE GENOMIC DNA]</scope>
</reference>
<protein>
    <recommendedName>
        <fullName evidence="1">Minor capsid protein p49</fullName>
        <shortName>p49</shortName>
    </recommendedName>
</protein>
<gene>
    <name type="ordered locus">Mal-083</name>
    <name type="ORF">L09JL</name>
    <name type="ORF">L09LL</name>
</gene>
<organismHost>
    <name type="scientific">Ornithodoros</name>
    <name type="common">relapsing fever ticks</name>
    <dbReference type="NCBI Taxonomy" id="6937"/>
</organismHost>
<organismHost>
    <name type="scientific">Phacochoerus aethiopicus</name>
    <name type="common">Warthog</name>
    <dbReference type="NCBI Taxonomy" id="85517"/>
</organismHost>
<organismHost>
    <name type="scientific">Phacochoerus africanus</name>
    <name type="common">Warthog</name>
    <dbReference type="NCBI Taxonomy" id="41426"/>
</organismHost>
<organismHost>
    <name type="scientific">Potamochoerus larvatus</name>
    <name type="common">Bushpig</name>
    <dbReference type="NCBI Taxonomy" id="273792"/>
</organismHost>
<organismHost>
    <name type="scientific">Sus scrofa</name>
    <name type="common">Pig</name>
    <dbReference type="NCBI Taxonomy" id="9823"/>
</organismHost>
<sequence length="437" mass="49205">MYHDYASKLLADYRSDPPLWESDLPRHNRYSDNILNSRYCGNKNGAEPVYNESTNSPGKAERGLQLSDLRNFSFMLNPQHKNIGYGDAQDLEPYSSIPKNKLFNNFKNHRPAFSTHTENLIRRNVVRTEKKTFPQVASLKSTQKHCLTQPSSLPSLKNPKNISVPSARFSEHTKFFSYEDLPKLKTKGAIKHEQHLGDQMSGQYYNGYIPHKDVYNILCLAHNLPASVEKVIAGRGIPLGNPHVKPNIEQELIKSACAYTGIPIGPLPSKDLQHGREYQEFSANRHMLQVSNILHSVFANHSIKPQILEDIPTLNAQLTSIKPISPFLNKAYQTHYMENIVTLVPRFKSIANYSSPIPNYSKRDSGQAEYFDTSKQTISRHNNYIPKYTGGIGDSKLDTTFPKDFNASSVPLTSAEKDHSLRGDNSACCISSISPSL</sequence>
<keyword id="KW-0426">Late protein</keyword>
<keyword id="KW-0946">Virion</keyword>
<name>P49_ASFM2</name>
<accession>Q8V9T4</accession>
<accession>Q8V9T6</accession>
<feature type="chain" id="PRO_0000373414" description="Minor capsid protein p49">
    <location>
        <begin position="1"/>
        <end position="437"/>
    </location>
</feature>
<evidence type="ECO:0000250" key="1">
    <source>
        <dbReference type="UniProtKB" id="Q65165"/>
    </source>
</evidence>
<evidence type="ECO:0000305" key="2"/>
<comment type="function">
    <text evidence="1">Together with the penton and the other minor capsid proteins (M1249L, p17), forms a complicated network immediately below the outer capsid shell, stabilizing the whole capsid (By similarity). Plays an essential role in the formation of infectious virus particles. Especially required for the formation of the capsid vertices (By similarity). During virion assembly, associates with the membrane and probably mediates the docking of the penton complex to the inner membrane, where it recruits the capsomers to form the penton core (By similarity).</text>
</comment>
<comment type="subcellular location">
    <subcellularLocation>
        <location evidence="1">Virion</location>
    </subcellularLocation>
    <text evidence="1">Localizes in close proximity to the capsid vertices.</text>
</comment>
<comment type="induction">
    <text evidence="2">Expressed in the late phase of the viral replicative cycle.</text>
</comment>
<comment type="similarity">
    <text evidence="2">Belongs to the asfivirus p49 structural protein family.</text>
</comment>
<comment type="sequence caution" evidence="2">
    <conflict type="erroneous gene model prediction">
        <sequence resource="EMBL-CDS" id="AAL31327"/>
    </conflict>
</comment>
<comment type="sequence caution" evidence="2">
    <conflict type="erroneous gene model prediction">
        <sequence resource="EMBL-CDS" id="AAL31329"/>
    </conflict>
</comment>
<organism>
    <name type="scientific">African swine fever virus (isolate Tick/Malawi/Lil 20-1/1983)</name>
    <name type="common">ASFV</name>
    <dbReference type="NCBI Taxonomy" id="10500"/>
    <lineage>
        <taxon>Viruses</taxon>
        <taxon>Varidnaviria</taxon>
        <taxon>Bamfordvirae</taxon>
        <taxon>Nucleocytoviricota</taxon>
        <taxon>Pokkesviricetes</taxon>
        <taxon>Asfuvirales</taxon>
        <taxon>Asfarviridae</taxon>
        <taxon>Asfivirus</taxon>
        <taxon>African swine fever virus</taxon>
    </lineage>
</organism>